<keyword id="KW-0028">Amino-acid biosynthesis</keyword>
<keyword id="KW-0963">Cytoplasm</keyword>
<keyword id="KW-0368">Histidine biosynthesis</keyword>
<keyword id="KW-0413">Isomerase</keyword>
<dbReference type="EC" id="5.3.1.16" evidence="1"/>
<dbReference type="EMBL" id="CP000672">
    <property type="protein sequence ID" value="ABR00041.1"/>
    <property type="molecule type" value="Genomic_DNA"/>
</dbReference>
<dbReference type="SMR" id="A5UGY5"/>
<dbReference type="KEGG" id="hiq:CGSHiGG_05610"/>
<dbReference type="HOGENOM" id="CLU_048577_1_2_6"/>
<dbReference type="UniPathway" id="UPA00031">
    <property type="reaction ID" value="UER00009"/>
</dbReference>
<dbReference type="Proteomes" id="UP000001990">
    <property type="component" value="Chromosome"/>
</dbReference>
<dbReference type="GO" id="GO:0005737">
    <property type="term" value="C:cytoplasm"/>
    <property type="evidence" value="ECO:0007669"/>
    <property type="project" value="UniProtKB-SubCell"/>
</dbReference>
<dbReference type="GO" id="GO:0003949">
    <property type="term" value="F:1-(5-phosphoribosyl)-5-[(5-phosphoribosylamino)methylideneamino]imidazole-4-carboxamide isomerase activity"/>
    <property type="evidence" value="ECO:0007669"/>
    <property type="project" value="UniProtKB-UniRule"/>
</dbReference>
<dbReference type="GO" id="GO:0000105">
    <property type="term" value="P:L-histidine biosynthetic process"/>
    <property type="evidence" value="ECO:0007669"/>
    <property type="project" value="UniProtKB-UniRule"/>
</dbReference>
<dbReference type="GO" id="GO:0000162">
    <property type="term" value="P:L-tryptophan biosynthetic process"/>
    <property type="evidence" value="ECO:0007669"/>
    <property type="project" value="TreeGrafter"/>
</dbReference>
<dbReference type="CDD" id="cd04732">
    <property type="entry name" value="HisA"/>
    <property type="match status" value="1"/>
</dbReference>
<dbReference type="FunFam" id="3.20.20.70:FF:000009">
    <property type="entry name" value="1-(5-phosphoribosyl)-5-[(5-phosphoribosylamino)methylideneamino] imidazole-4-carboxamide isomerase"/>
    <property type="match status" value="1"/>
</dbReference>
<dbReference type="Gene3D" id="3.20.20.70">
    <property type="entry name" value="Aldolase class I"/>
    <property type="match status" value="1"/>
</dbReference>
<dbReference type="HAMAP" id="MF_01014">
    <property type="entry name" value="HisA"/>
    <property type="match status" value="1"/>
</dbReference>
<dbReference type="InterPro" id="IPR013785">
    <property type="entry name" value="Aldolase_TIM"/>
</dbReference>
<dbReference type="InterPro" id="IPR006062">
    <property type="entry name" value="His_biosynth"/>
</dbReference>
<dbReference type="InterPro" id="IPR006063">
    <property type="entry name" value="HisA_bact_arch"/>
</dbReference>
<dbReference type="InterPro" id="IPR044524">
    <property type="entry name" value="Isoase_HisA-like"/>
</dbReference>
<dbReference type="InterPro" id="IPR023016">
    <property type="entry name" value="Isoase_HisA-like_bact"/>
</dbReference>
<dbReference type="InterPro" id="IPR011060">
    <property type="entry name" value="RibuloseP-bd_barrel"/>
</dbReference>
<dbReference type="NCBIfam" id="TIGR00007">
    <property type="entry name" value="1-(5-phosphoribosyl)-5-[(5-phosphoribosylamino)methylideneamino]imidazole-4-carboxamide isomerase"/>
    <property type="match status" value="1"/>
</dbReference>
<dbReference type="PANTHER" id="PTHR43090">
    <property type="entry name" value="1-(5-PHOSPHORIBOSYL)-5-[(5-PHOSPHORIBOSYLAMINO)METHYLIDENEAMINO] IMIDAZOLE-4-CARBOXAMIDE ISOMERASE"/>
    <property type="match status" value="1"/>
</dbReference>
<dbReference type="PANTHER" id="PTHR43090:SF2">
    <property type="entry name" value="1-(5-PHOSPHORIBOSYL)-5-[(5-PHOSPHORIBOSYLAMINO)METHYLIDENEAMINO] IMIDAZOLE-4-CARBOXAMIDE ISOMERASE"/>
    <property type="match status" value="1"/>
</dbReference>
<dbReference type="Pfam" id="PF00977">
    <property type="entry name" value="His_biosynth"/>
    <property type="match status" value="1"/>
</dbReference>
<dbReference type="SUPFAM" id="SSF51366">
    <property type="entry name" value="Ribulose-phoshate binding barrel"/>
    <property type="match status" value="1"/>
</dbReference>
<organism>
    <name type="scientific">Haemophilus influenzae (strain PittGG)</name>
    <dbReference type="NCBI Taxonomy" id="374931"/>
    <lineage>
        <taxon>Bacteria</taxon>
        <taxon>Pseudomonadati</taxon>
        <taxon>Pseudomonadota</taxon>
        <taxon>Gammaproteobacteria</taxon>
        <taxon>Pasteurellales</taxon>
        <taxon>Pasteurellaceae</taxon>
        <taxon>Haemophilus</taxon>
    </lineage>
</organism>
<accession>A5UGY5</accession>
<gene>
    <name evidence="1" type="primary">hisA</name>
    <name type="ordered locus">CGSHiGG_05610</name>
</gene>
<protein>
    <recommendedName>
        <fullName evidence="1">1-(5-phosphoribosyl)-5-[(5-phosphoribosylamino)methylideneamino] imidazole-4-carboxamide isomerase</fullName>
        <ecNumber evidence="1">5.3.1.16</ecNumber>
    </recommendedName>
    <alternativeName>
        <fullName evidence="1">Phosphoribosylformimino-5-aminoimidazole carboxamide ribotide isomerase</fullName>
    </alternativeName>
</protein>
<comment type="catalytic activity">
    <reaction evidence="1">
        <text>1-(5-phospho-beta-D-ribosyl)-5-[(5-phospho-beta-D-ribosylamino)methylideneamino]imidazole-4-carboxamide = 5-[(5-phospho-1-deoxy-D-ribulos-1-ylimino)methylamino]-1-(5-phospho-beta-D-ribosyl)imidazole-4-carboxamide</text>
        <dbReference type="Rhea" id="RHEA:15469"/>
        <dbReference type="ChEBI" id="CHEBI:58435"/>
        <dbReference type="ChEBI" id="CHEBI:58525"/>
        <dbReference type="EC" id="5.3.1.16"/>
    </reaction>
</comment>
<comment type="pathway">
    <text evidence="1">Amino-acid biosynthesis; L-histidine biosynthesis; L-histidine from 5-phospho-alpha-D-ribose 1-diphosphate: step 4/9.</text>
</comment>
<comment type="subcellular location">
    <subcellularLocation>
        <location evidence="1">Cytoplasm</location>
    </subcellularLocation>
</comment>
<comment type="similarity">
    <text evidence="1">Belongs to the HisA/HisF family.</text>
</comment>
<feature type="chain" id="PRO_1000063211" description="1-(5-phosphoribosyl)-5-[(5-phosphoribosylamino)methylideneamino] imidazole-4-carboxamide isomerase">
    <location>
        <begin position="1"/>
        <end position="249"/>
    </location>
</feature>
<feature type="active site" description="Proton acceptor" evidence="1">
    <location>
        <position position="11"/>
    </location>
</feature>
<feature type="active site" description="Proton donor" evidence="1">
    <location>
        <position position="133"/>
    </location>
</feature>
<sequence>MKQSIIIPALDLINGQVVRLHQGDYAKQTTYSDNPIKQFDNYVRQGAKQLHLVDLTGAKNPQSRQTALIGKIVEATQCKVQVGGGIRTEQDVADLLAVGANRVVIGSTAVTHRSMVKNWFIKYGAEKFVLALDVNINASGQKIVAISGWQEESGVLLETLIEDFQTVGLQQVLCTDISRDGTLTGSNIGLYQEICEKYPPIQFQSSGGIGSLADIEALKGTGVSGVIVGRALLEGKFTLSEAIKCWQNG</sequence>
<evidence type="ECO:0000255" key="1">
    <source>
        <dbReference type="HAMAP-Rule" id="MF_01014"/>
    </source>
</evidence>
<name>HIS4_HAEIG</name>
<reference key="1">
    <citation type="journal article" date="2007" name="Genome Biol.">
        <title>Characterization and modeling of the Haemophilus influenzae core and supragenomes based on the complete genomic sequences of Rd and 12 clinical nontypeable strains.</title>
        <authorList>
            <person name="Hogg J.S."/>
            <person name="Hu F.Z."/>
            <person name="Janto B."/>
            <person name="Boissy R."/>
            <person name="Hayes J."/>
            <person name="Keefe R."/>
            <person name="Post J.C."/>
            <person name="Ehrlich G.D."/>
        </authorList>
    </citation>
    <scope>NUCLEOTIDE SEQUENCE [LARGE SCALE GENOMIC DNA]</scope>
    <source>
        <strain>PittGG</strain>
    </source>
</reference>
<proteinExistence type="inferred from homology"/>